<organism>
    <name type="scientific">Cryptococcus neoformans var. neoformans serotype D (strain B-3501A)</name>
    <name type="common">Filobasidiella neoformans</name>
    <dbReference type="NCBI Taxonomy" id="283643"/>
    <lineage>
        <taxon>Eukaryota</taxon>
        <taxon>Fungi</taxon>
        <taxon>Dikarya</taxon>
        <taxon>Basidiomycota</taxon>
        <taxon>Agaricomycotina</taxon>
        <taxon>Tremellomycetes</taxon>
        <taxon>Tremellales</taxon>
        <taxon>Cryptococcaceae</taxon>
        <taxon>Cryptococcus</taxon>
        <taxon>Cryptococcus neoformans species complex</taxon>
    </lineage>
</organism>
<comment type="function">
    <text evidence="1">Catalyzes the formation of N(7)-methylguanine at position 46 (m7G46) in tRNA.</text>
</comment>
<comment type="catalytic activity">
    <reaction evidence="1">
        <text>guanosine(46) in tRNA + S-adenosyl-L-methionine = N(7)-methylguanosine(46) in tRNA + S-adenosyl-L-homocysteine</text>
        <dbReference type="Rhea" id="RHEA:42708"/>
        <dbReference type="Rhea" id="RHEA-COMP:10188"/>
        <dbReference type="Rhea" id="RHEA-COMP:10189"/>
        <dbReference type="ChEBI" id="CHEBI:57856"/>
        <dbReference type="ChEBI" id="CHEBI:59789"/>
        <dbReference type="ChEBI" id="CHEBI:74269"/>
        <dbReference type="ChEBI" id="CHEBI:74480"/>
        <dbReference type="EC" id="2.1.1.33"/>
    </reaction>
</comment>
<comment type="pathway">
    <text evidence="1">tRNA modification; N(7)-methylguanine-tRNA biosynthesis.</text>
</comment>
<comment type="subunit">
    <text evidence="1">Forms a complex with TRM82.</text>
</comment>
<comment type="subcellular location">
    <subcellularLocation>
        <location evidence="1">Nucleus</location>
    </subcellularLocation>
</comment>
<comment type="similarity">
    <text evidence="1">Belongs to the class I-like SAM-binding methyltransferase superfamily. TrmB family.</text>
</comment>
<name>TRMB_CRYNB</name>
<evidence type="ECO:0000255" key="1">
    <source>
        <dbReference type="HAMAP-Rule" id="MF_03055"/>
    </source>
</evidence>
<gene>
    <name evidence="1" type="primary">TRM8</name>
    <name type="ordered locus">CNBB5420</name>
</gene>
<protein>
    <recommendedName>
        <fullName evidence="1">tRNA (guanine-N(7)-)-methyltransferase</fullName>
        <ecNumber evidence="1">2.1.1.33</ecNumber>
    </recommendedName>
    <alternativeName>
        <fullName evidence="1">Transfer RNA methyltransferase 8</fullName>
    </alternativeName>
    <alternativeName>
        <fullName evidence="1">tRNA (guanine(46)-N(7))-methyltransferase</fullName>
    </alternativeName>
    <alternativeName>
        <fullName evidence="1">tRNA(m7G46)-methyltransferase</fullName>
    </alternativeName>
</protein>
<accession>P0CS81</accession>
<accession>Q55X18</accession>
<accession>Q5KMW7</accession>
<dbReference type="EC" id="2.1.1.33" evidence="1"/>
<dbReference type="EMBL" id="AAEY01000011">
    <property type="protein sequence ID" value="EAL22369.1"/>
    <property type="molecule type" value="Genomic_DNA"/>
</dbReference>
<dbReference type="RefSeq" id="XP_777016.1">
    <property type="nucleotide sequence ID" value="XM_771923.1"/>
</dbReference>
<dbReference type="SMR" id="P0CS81"/>
<dbReference type="EnsemblFungi" id="AAW41459">
    <property type="protein sequence ID" value="AAW41459"/>
    <property type="gene ID" value="CNB00250"/>
</dbReference>
<dbReference type="GeneID" id="4934638"/>
<dbReference type="KEGG" id="cnb:CNBB5420"/>
<dbReference type="VEuPathDB" id="FungiDB:CNBB5420"/>
<dbReference type="HOGENOM" id="CLU_050910_3_1_1"/>
<dbReference type="OrthoDB" id="868at5206"/>
<dbReference type="UniPathway" id="UPA00989"/>
<dbReference type="GO" id="GO:0005634">
    <property type="term" value="C:nucleus"/>
    <property type="evidence" value="ECO:0007669"/>
    <property type="project" value="UniProtKB-SubCell"/>
</dbReference>
<dbReference type="GO" id="GO:0106143">
    <property type="term" value="C:tRNA (m7G46) methyltransferase complex"/>
    <property type="evidence" value="ECO:0007669"/>
    <property type="project" value="EnsemblFungi"/>
</dbReference>
<dbReference type="GO" id="GO:0008176">
    <property type="term" value="F:tRNA (guanine(46)-N7)-methyltransferase activity"/>
    <property type="evidence" value="ECO:0007669"/>
    <property type="project" value="UniProtKB-UniRule"/>
</dbReference>
<dbReference type="GO" id="GO:0000049">
    <property type="term" value="F:tRNA binding"/>
    <property type="evidence" value="ECO:0007669"/>
    <property type="project" value="UniProtKB-UniRule"/>
</dbReference>
<dbReference type="CDD" id="cd02440">
    <property type="entry name" value="AdoMet_MTases"/>
    <property type="match status" value="1"/>
</dbReference>
<dbReference type="FunFam" id="3.40.50.150:FF:000060">
    <property type="entry name" value="tRNA (guanine-N(7)-)-methyltransferase"/>
    <property type="match status" value="1"/>
</dbReference>
<dbReference type="Gene3D" id="3.40.50.150">
    <property type="entry name" value="Vaccinia Virus protein VP39"/>
    <property type="match status" value="1"/>
</dbReference>
<dbReference type="HAMAP" id="MF_03055">
    <property type="entry name" value="tRNA_methyltr_TrmB_euk"/>
    <property type="match status" value="1"/>
</dbReference>
<dbReference type="InterPro" id="IPR029063">
    <property type="entry name" value="SAM-dependent_MTases_sf"/>
</dbReference>
<dbReference type="InterPro" id="IPR025763">
    <property type="entry name" value="Trm8_euk"/>
</dbReference>
<dbReference type="InterPro" id="IPR003358">
    <property type="entry name" value="tRNA_(Gua-N-7)_MeTrfase_Trmb"/>
</dbReference>
<dbReference type="NCBIfam" id="TIGR00091">
    <property type="entry name" value="tRNA (guanosine(46)-N7)-methyltransferase TrmB"/>
    <property type="match status" value="1"/>
</dbReference>
<dbReference type="PANTHER" id="PTHR23417">
    <property type="entry name" value="3-DEOXY-D-MANNO-OCTULOSONIC-ACID TRANSFERASE/TRNA GUANINE-N 7 - -METHYLTRANSFERASE"/>
    <property type="match status" value="1"/>
</dbReference>
<dbReference type="PANTHER" id="PTHR23417:SF16">
    <property type="entry name" value="TRNA (GUANINE-N(7)-)-METHYLTRANSFERASE"/>
    <property type="match status" value="1"/>
</dbReference>
<dbReference type="Pfam" id="PF02390">
    <property type="entry name" value="Methyltransf_4"/>
    <property type="match status" value="1"/>
</dbReference>
<dbReference type="SUPFAM" id="SSF53335">
    <property type="entry name" value="S-adenosyl-L-methionine-dependent methyltransferases"/>
    <property type="match status" value="1"/>
</dbReference>
<dbReference type="PROSITE" id="PS51625">
    <property type="entry name" value="SAM_MT_TRMB"/>
    <property type="match status" value="1"/>
</dbReference>
<sequence length="286" mass="32263">MEAGPSTASPGVSVSPAPALTAGEVQLLKVPQKRFYRQRAHANVFIDHELDYPKRPELMDWSTHYPAYFSQPNEDGTITQGEKKVEWADVGCGFGGLLMALAPLFPEKLMLGMEIRTSVTKYVTDRIAATRQAQSLLPADSVDTKPGGYQNVSVIKANSMKHMPNFFAKGQLEKIFFLFPDPHFKNRKHKARIITPALLAEYAYVLRPGGILYTVTDVKDLHEWMAHHLHAHPLFEYIPTETLSDDPILEAARTATEEGQKVERNKGDKWVACFRRKEDPKEEDED</sequence>
<proteinExistence type="inferred from homology"/>
<keyword id="KW-0489">Methyltransferase</keyword>
<keyword id="KW-0539">Nucleus</keyword>
<keyword id="KW-0694">RNA-binding</keyword>
<keyword id="KW-0949">S-adenosyl-L-methionine</keyword>
<keyword id="KW-0808">Transferase</keyword>
<keyword id="KW-0819">tRNA processing</keyword>
<keyword id="KW-0820">tRNA-binding</keyword>
<reference key="1">
    <citation type="journal article" date="2005" name="Science">
        <title>The genome of the basidiomycetous yeast and human pathogen Cryptococcus neoformans.</title>
        <authorList>
            <person name="Loftus B.J."/>
            <person name="Fung E."/>
            <person name="Roncaglia P."/>
            <person name="Rowley D."/>
            <person name="Amedeo P."/>
            <person name="Bruno D."/>
            <person name="Vamathevan J."/>
            <person name="Miranda M."/>
            <person name="Anderson I.J."/>
            <person name="Fraser J.A."/>
            <person name="Allen J.E."/>
            <person name="Bosdet I.E."/>
            <person name="Brent M.R."/>
            <person name="Chiu R."/>
            <person name="Doering T.L."/>
            <person name="Donlin M.J."/>
            <person name="D'Souza C.A."/>
            <person name="Fox D.S."/>
            <person name="Grinberg V."/>
            <person name="Fu J."/>
            <person name="Fukushima M."/>
            <person name="Haas B.J."/>
            <person name="Huang J.C."/>
            <person name="Janbon G."/>
            <person name="Jones S.J.M."/>
            <person name="Koo H.L."/>
            <person name="Krzywinski M.I."/>
            <person name="Kwon-Chung K.J."/>
            <person name="Lengeler K.B."/>
            <person name="Maiti R."/>
            <person name="Marra M.A."/>
            <person name="Marra R.E."/>
            <person name="Mathewson C.A."/>
            <person name="Mitchell T.G."/>
            <person name="Pertea M."/>
            <person name="Riggs F.R."/>
            <person name="Salzberg S.L."/>
            <person name="Schein J.E."/>
            <person name="Shvartsbeyn A."/>
            <person name="Shin H."/>
            <person name="Shumway M."/>
            <person name="Specht C.A."/>
            <person name="Suh B.B."/>
            <person name="Tenney A."/>
            <person name="Utterback T.R."/>
            <person name="Wickes B.L."/>
            <person name="Wortman J.R."/>
            <person name="Wye N.H."/>
            <person name="Kronstad J.W."/>
            <person name="Lodge J.K."/>
            <person name="Heitman J."/>
            <person name="Davis R.W."/>
            <person name="Fraser C.M."/>
            <person name="Hyman R.W."/>
        </authorList>
    </citation>
    <scope>NUCLEOTIDE SEQUENCE [LARGE SCALE GENOMIC DNA]</scope>
    <source>
        <strain>B-3501A</strain>
    </source>
</reference>
<feature type="chain" id="PRO_0000410317" description="tRNA (guanine-N(7)-)-methyltransferase">
    <location>
        <begin position="1"/>
        <end position="286"/>
    </location>
</feature>
<feature type="active site" evidence="1">
    <location>
        <position position="181"/>
    </location>
</feature>
<feature type="binding site" evidence="1">
    <location>
        <position position="91"/>
    </location>
    <ligand>
        <name>S-adenosyl-L-methionine</name>
        <dbReference type="ChEBI" id="CHEBI:59789"/>
    </ligand>
</feature>
<feature type="binding site" evidence="1">
    <location>
        <begin position="114"/>
        <end position="115"/>
    </location>
    <ligand>
        <name>S-adenosyl-L-methionine</name>
        <dbReference type="ChEBI" id="CHEBI:59789"/>
    </ligand>
</feature>
<feature type="binding site" evidence="1">
    <location>
        <begin position="158"/>
        <end position="159"/>
    </location>
    <ligand>
        <name>S-adenosyl-L-methionine</name>
        <dbReference type="ChEBI" id="CHEBI:59789"/>
    </ligand>
</feature>
<feature type="binding site" evidence="1">
    <location>
        <position position="178"/>
    </location>
    <ligand>
        <name>S-adenosyl-L-methionine</name>
        <dbReference type="ChEBI" id="CHEBI:59789"/>
    </ligand>
</feature>
<feature type="binding site" evidence="1">
    <location>
        <begin position="256"/>
        <end position="258"/>
    </location>
    <ligand>
        <name>S-adenosyl-L-methionine</name>
        <dbReference type="ChEBI" id="CHEBI:59789"/>
    </ligand>
</feature>